<dbReference type="PIR" id="A32026">
    <property type="entry name" value="A32026"/>
</dbReference>
<dbReference type="SMR" id="P20097"/>
<dbReference type="STRING" id="10141.ENSCPOP00000001595"/>
<dbReference type="GlyCosmos" id="P20097">
    <property type="glycosylation" value="1 site, No reported glycans"/>
</dbReference>
<dbReference type="eggNOG" id="KOG1340">
    <property type="taxonomic scope" value="Eukaryota"/>
</dbReference>
<dbReference type="HOGENOM" id="CLU_2579898_0_0_1"/>
<dbReference type="InParanoid" id="P20097"/>
<dbReference type="Proteomes" id="UP000005447">
    <property type="component" value="Unassembled WGS sequence"/>
</dbReference>
<dbReference type="GO" id="GO:0005576">
    <property type="term" value="C:extracellular region"/>
    <property type="evidence" value="ECO:0000250"/>
    <property type="project" value="UniProtKB"/>
</dbReference>
<dbReference type="GO" id="GO:0005770">
    <property type="term" value="C:late endosome"/>
    <property type="evidence" value="ECO:0000250"/>
    <property type="project" value="UniProtKB"/>
</dbReference>
<dbReference type="GO" id="GO:0005764">
    <property type="term" value="C:lysosome"/>
    <property type="evidence" value="ECO:0000250"/>
    <property type="project" value="UniProtKB"/>
</dbReference>
<dbReference type="GO" id="GO:0016020">
    <property type="term" value="C:membrane"/>
    <property type="evidence" value="ECO:0007669"/>
    <property type="project" value="GOC"/>
</dbReference>
<dbReference type="GO" id="GO:0007193">
    <property type="term" value="P:adenylate cyclase-inhibiting G protein-coupled receptor signaling pathway"/>
    <property type="evidence" value="ECO:0007669"/>
    <property type="project" value="TreeGrafter"/>
</dbReference>
<dbReference type="GO" id="GO:0060742">
    <property type="term" value="P:epithelial cell differentiation involved in prostate gland development"/>
    <property type="evidence" value="ECO:0007669"/>
    <property type="project" value="TreeGrafter"/>
</dbReference>
<dbReference type="GO" id="GO:0007041">
    <property type="term" value="P:lysosomal transport"/>
    <property type="evidence" value="ECO:0000250"/>
    <property type="project" value="UniProtKB"/>
</dbReference>
<dbReference type="GO" id="GO:0060736">
    <property type="term" value="P:prostate gland growth"/>
    <property type="evidence" value="ECO:0007669"/>
    <property type="project" value="TreeGrafter"/>
</dbReference>
<dbReference type="GO" id="GO:0019216">
    <property type="term" value="P:regulation of lipid metabolic process"/>
    <property type="evidence" value="ECO:0007669"/>
    <property type="project" value="TreeGrafter"/>
</dbReference>
<dbReference type="GO" id="GO:0006665">
    <property type="term" value="P:sphingolipid metabolic process"/>
    <property type="evidence" value="ECO:0007669"/>
    <property type="project" value="UniProtKB-KW"/>
</dbReference>
<dbReference type="FunFam" id="1.10.225.10:FF:000017">
    <property type="entry name" value="SaPosin-like Protein family"/>
    <property type="match status" value="1"/>
</dbReference>
<dbReference type="Gene3D" id="1.10.225.10">
    <property type="entry name" value="Saposin-like"/>
    <property type="match status" value="1"/>
</dbReference>
<dbReference type="InterPro" id="IPR007856">
    <property type="entry name" value="SapB_1"/>
</dbReference>
<dbReference type="InterPro" id="IPR008138">
    <property type="entry name" value="SapB_2"/>
</dbReference>
<dbReference type="InterPro" id="IPR008373">
    <property type="entry name" value="Saposin"/>
</dbReference>
<dbReference type="InterPro" id="IPR011001">
    <property type="entry name" value="Saposin-like"/>
</dbReference>
<dbReference type="InterPro" id="IPR008139">
    <property type="entry name" value="SaposinB_dom"/>
</dbReference>
<dbReference type="InterPro" id="IPR051428">
    <property type="entry name" value="Sphingo_Act-Surfact_Prot"/>
</dbReference>
<dbReference type="PANTHER" id="PTHR11480:SF36">
    <property type="entry name" value="PROSAPOSIN"/>
    <property type="match status" value="1"/>
</dbReference>
<dbReference type="PANTHER" id="PTHR11480">
    <property type="entry name" value="SAPOSIN-RELATED"/>
    <property type="match status" value="1"/>
</dbReference>
<dbReference type="Pfam" id="PF05184">
    <property type="entry name" value="SapB_1"/>
    <property type="match status" value="1"/>
</dbReference>
<dbReference type="Pfam" id="PF03489">
    <property type="entry name" value="SapB_2"/>
    <property type="match status" value="1"/>
</dbReference>
<dbReference type="PRINTS" id="PR01797">
    <property type="entry name" value="SAPOSIN"/>
</dbReference>
<dbReference type="SMART" id="SM00741">
    <property type="entry name" value="SapB"/>
    <property type="match status" value="1"/>
</dbReference>
<dbReference type="SUPFAM" id="SSF47862">
    <property type="entry name" value="Saposin"/>
    <property type="match status" value="1"/>
</dbReference>
<dbReference type="PROSITE" id="PS50015">
    <property type="entry name" value="SAP_B"/>
    <property type="match status" value="1"/>
</dbReference>
<accession>P20097</accession>
<comment type="function">
    <text>Saposin-A and saposin-C stimulate the hydrolysis of glucosylceramide by beta-glucosylceramidase (EC 3.2.1.45) and galactosylceramide by beta-galactosylceramidase (EC 3.2.1.46). Saposin-C apparently acts by combining with the enzyme and acidic lipid to form an activated complex, rather than by solubilizing the substrate.</text>
</comment>
<feature type="chain" id="PRO_0000175239" description="Saposin-C">
    <location>
        <begin position="1"/>
        <end position="81"/>
    </location>
</feature>
<feature type="domain" description="Saposin B-type" evidence="1">
    <location>
        <begin position="1"/>
        <end position="81"/>
    </location>
</feature>
<feature type="glycosylation site" description="N-linked (GlcNAc...) asparagine">
    <location>
        <position position="22"/>
    </location>
</feature>
<feature type="disulfide bond" evidence="1">
    <location>
        <begin position="5"/>
        <end position="78"/>
    </location>
</feature>
<feature type="disulfide bond" evidence="1">
    <location>
        <begin position="8"/>
        <end position="72"/>
    </location>
</feature>
<feature type="disulfide bond" evidence="1">
    <location>
        <begin position="36"/>
        <end position="47"/>
    </location>
</feature>
<keyword id="KW-0903">Direct protein sequencing</keyword>
<keyword id="KW-1015">Disulfide bond</keyword>
<keyword id="KW-0325">Glycoprotein</keyword>
<keyword id="KW-0443">Lipid metabolism</keyword>
<keyword id="KW-1185">Reference proteome</keyword>
<keyword id="KW-0746">Sphingolipid metabolism</keyword>
<proteinExistence type="evidence at protein level"/>
<organism>
    <name type="scientific">Cavia porcellus</name>
    <name type="common">Guinea pig</name>
    <dbReference type="NCBI Taxonomy" id="10141"/>
    <lineage>
        <taxon>Eukaryota</taxon>
        <taxon>Metazoa</taxon>
        <taxon>Chordata</taxon>
        <taxon>Craniata</taxon>
        <taxon>Vertebrata</taxon>
        <taxon>Euteleostomi</taxon>
        <taxon>Mammalia</taxon>
        <taxon>Eutheria</taxon>
        <taxon>Euarchontoglires</taxon>
        <taxon>Glires</taxon>
        <taxon>Rodentia</taxon>
        <taxon>Hystricomorpha</taxon>
        <taxon>Caviidae</taxon>
        <taxon>Cavia</taxon>
    </lineage>
</organism>
<sequence length="81" mass="8852">ESVTCKACEYVVKKVMELIDNNRTEEKIIHALDSVCALLPESVSEVCQEVVDTYGDSIVALLLQEMSPELVCSELGLCMSG</sequence>
<protein>
    <recommendedName>
        <fullName>Saposin-C</fullName>
    </recommendedName>
    <alternativeName>
        <fullName>Co-beta-glucosidase</fullName>
    </alternativeName>
    <alternativeName>
        <fullName>Glucosylceramidase activator</fullName>
    </alternativeName>
    <alternativeName>
        <fullName>Sphingolipid activator protein 2</fullName>
        <shortName>SAP-2</shortName>
    </alternativeName>
</protein>
<name>SAP_CAVPO</name>
<evidence type="ECO:0000255" key="1">
    <source>
        <dbReference type="PROSITE-ProRule" id="PRU00415"/>
    </source>
</evidence>
<gene>
    <name type="primary">PSAP</name>
</gene>
<reference key="1">
    <citation type="journal article" date="1988" name="J. Biol. Chem.">
        <title>The activator protein for glucosylceramide beta-glucosidase from guinea pig liver. Improved isolation method and complete amino acid sequence.</title>
        <authorList>
            <person name="Sano A."/>
            <person name="Radin N.S."/>
            <person name="Johnson L.L."/>
            <person name="Tarr G.E."/>
        </authorList>
    </citation>
    <scope>PROTEIN SEQUENCE</scope>
    <source>
        <tissue>Liver</tissue>
    </source>
</reference>